<accession>Q9RX88</accession>
<sequence length="237" mass="25390">MELTAKPRTPKQKLDESMIAAVAYNKENNVSFALDRKAFDRAFRQQSTTGLFDITVEGGETFPALVKAVQMDKRKRAPIHVDFYMVTYGEPVEVSVPVHTTGRSQGEVQGGLVDIVVHNLQIVAPGPRRIPQELVVDVTKMNIGDHITAGDIKLPEGCTLAADPELTVVSVLPPRLTAEELEAEVQAAQVAGLVAAGELSEEAAEAVLEGDASLEEVKAEASEDNAGTDSEDNSDAQ</sequence>
<name>RL25_DEIRA</name>
<gene>
    <name type="primary">rplY</name>
    <name type="synonym">ctc</name>
    <name type="ordered locus">DR_0427</name>
</gene>
<proteinExistence type="evidence at protein level"/>
<feature type="chain" id="PRO_0000181543" description="Large ribosomal subunit protein bL25">
    <location>
        <begin position="1"/>
        <end position="237"/>
    </location>
</feature>
<feature type="region of interest" description="N-terminal domain">
    <location>
        <begin position="1"/>
        <end position="104"/>
    </location>
</feature>
<feature type="region of interest" description="Middle domain">
    <location>
        <begin position="105"/>
        <end position="189"/>
    </location>
</feature>
<feature type="region of interest" description="C-terminal domain">
    <location>
        <begin position="190"/>
        <end position="237"/>
    </location>
</feature>
<feature type="region of interest" description="Disordered" evidence="1">
    <location>
        <begin position="205"/>
        <end position="237"/>
    </location>
</feature>
<feature type="strand" evidence="14">
    <location>
        <begin position="2"/>
        <end position="4"/>
    </location>
</feature>
<feature type="turn" evidence="11">
    <location>
        <begin position="11"/>
        <end position="13"/>
    </location>
</feature>
<feature type="turn" evidence="11">
    <location>
        <begin position="15"/>
        <end position="17"/>
    </location>
</feature>
<feature type="strand" evidence="11">
    <location>
        <begin position="18"/>
        <end position="24"/>
    </location>
</feature>
<feature type="strand" evidence="11">
    <location>
        <begin position="26"/>
        <end position="35"/>
    </location>
</feature>
<feature type="helix" evidence="11">
    <location>
        <begin position="36"/>
        <end position="46"/>
    </location>
</feature>
<feature type="helix" evidence="12">
    <location>
        <begin position="47"/>
        <end position="49"/>
    </location>
</feature>
<feature type="strand" evidence="11">
    <location>
        <begin position="52"/>
        <end position="55"/>
    </location>
</feature>
<feature type="strand" evidence="10">
    <location>
        <begin position="57"/>
        <end position="59"/>
    </location>
</feature>
<feature type="strand" evidence="11">
    <location>
        <begin position="61"/>
        <end position="72"/>
    </location>
</feature>
<feature type="turn" evidence="11">
    <location>
        <begin position="73"/>
        <end position="76"/>
    </location>
</feature>
<feature type="strand" evidence="11">
    <location>
        <begin position="77"/>
        <end position="85"/>
    </location>
</feature>
<feature type="strand" evidence="14">
    <location>
        <begin position="88"/>
        <end position="90"/>
    </location>
</feature>
<feature type="strand" evidence="11">
    <location>
        <begin position="94"/>
        <end position="97"/>
    </location>
</feature>
<feature type="strand" evidence="9">
    <location>
        <begin position="99"/>
        <end position="102"/>
    </location>
</feature>
<feature type="turn" evidence="11">
    <location>
        <begin position="107"/>
        <end position="110"/>
    </location>
</feature>
<feature type="strand" evidence="11">
    <location>
        <begin position="112"/>
        <end position="114"/>
    </location>
</feature>
<feature type="strand" evidence="11">
    <location>
        <begin position="116"/>
        <end position="123"/>
    </location>
</feature>
<feature type="strand" evidence="13">
    <location>
        <begin position="127"/>
        <end position="129"/>
    </location>
</feature>
<feature type="strand" evidence="9">
    <location>
        <begin position="135"/>
        <end position="137"/>
    </location>
</feature>
<feature type="helix" evidence="15">
    <location>
        <begin position="138"/>
        <end position="140"/>
    </location>
</feature>
<feature type="strand" evidence="11">
    <location>
        <begin position="147"/>
        <end position="149"/>
    </location>
</feature>
<feature type="strand" evidence="10">
    <location>
        <begin position="155"/>
        <end position="157"/>
    </location>
</feature>
<feature type="strand" evidence="10">
    <location>
        <begin position="159"/>
        <end position="162"/>
    </location>
</feature>
<feature type="strand" evidence="11">
    <location>
        <begin position="166"/>
        <end position="172"/>
    </location>
</feature>
<comment type="function">
    <text>This is one of 3 proteins that mediate the attachment of the 5S rRNA onto the large ribosomal subunit. This protein has three domains. The N-terminal one is bound on the solvent face, the middle domain fills the space between the 5S rRNA and the L11 arm contacting the 23S rRNA while the C-terminal domain is on the edge of the intersubunit interface and contacts the A site. The protein conformation changes upon binding of a tRNA mimic to the A site, although the mimic does not interact directly with CTC itself, consistent with CTCs presumed role in moderating A site binding.</text>
</comment>
<comment type="subunit">
    <text evidence="2 3 4 5 6 7">Part of the 50S ribosomal subunit. Contacts proteins L11 and L16, the A site tRNA, and the 5S and 23S rRNAs.</text>
</comment>
<comment type="similarity">
    <text evidence="8">Belongs to the bacterial ribosomal protein bL25 family. CTC subfamily.</text>
</comment>
<comment type="sequence caution" evidence="8">
    <conflict type="erroneous initiation">
        <sequence resource="EMBL-CDS" id="AAF10004"/>
    </conflict>
</comment>
<dbReference type="EMBL" id="AE000513">
    <property type="protein sequence ID" value="AAF10004.1"/>
    <property type="status" value="ALT_INIT"/>
    <property type="molecule type" value="Genomic_DNA"/>
</dbReference>
<dbReference type="PIR" id="A75521">
    <property type="entry name" value="A75521"/>
</dbReference>
<dbReference type="RefSeq" id="NP_294150.1">
    <property type="nucleotide sequence ID" value="NC_001263.1"/>
</dbReference>
<dbReference type="RefSeq" id="WP_027479566.1">
    <property type="nucleotide sequence ID" value="NC_001263.1"/>
</dbReference>
<dbReference type="PDB" id="1NJM">
    <property type="method" value="X-ray"/>
    <property type="resolution" value="3.60 A"/>
    <property type="chains" value="T=1-237"/>
</dbReference>
<dbReference type="PDB" id="1NJP">
    <property type="method" value="X-ray"/>
    <property type="resolution" value="3.50 A"/>
    <property type="chains" value="T=1-237"/>
</dbReference>
<dbReference type="PDB" id="1NKW">
    <property type="method" value="X-ray"/>
    <property type="resolution" value="3.10 A"/>
    <property type="chains" value="T=1-237"/>
</dbReference>
<dbReference type="PDB" id="1NWX">
    <property type="method" value="X-ray"/>
    <property type="resolution" value="3.50 A"/>
    <property type="chains" value="T=1-237"/>
</dbReference>
<dbReference type="PDB" id="1NWY">
    <property type="method" value="X-ray"/>
    <property type="resolution" value="3.30 A"/>
    <property type="chains" value="T=1-237"/>
</dbReference>
<dbReference type="PDB" id="1SM1">
    <property type="method" value="X-ray"/>
    <property type="resolution" value="3.42 A"/>
    <property type="chains" value="T=1-237"/>
</dbReference>
<dbReference type="PDB" id="1XBP">
    <property type="method" value="X-ray"/>
    <property type="resolution" value="3.50 A"/>
    <property type="chains" value="T=1-237"/>
</dbReference>
<dbReference type="PDB" id="2ZJP">
    <property type="method" value="X-ray"/>
    <property type="resolution" value="3.70 A"/>
    <property type="chains" value="S=1-237"/>
</dbReference>
<dbReference type="PDB" id="2ZJQ">
    <property type="method" value="X-ray"/>
    <property type="resolution" value="3.30 A"/>
    <property type="chains" value="S=1-237"/>
</dbReference>
<dbReference type="PDB" id="2ZJR">
    <property type="method" value="X-ray"/>
    <property type="resolution" value="2.91 A"/>
    <property type="chains" value="S=1-237"/>
</dbReference>
<dbReference type="PDB" id="3CF5">
    <property type="method" value="X-ray"/>
    <property type="resolution" value="3.30 A"/>
    <property type="chains" value="S=1-237"/>
</dbReference>
<dbReference type="PDB" id="3DLL">
    <property type="method" value="X-ray"/>
    <property type="resolution" value="3.50 A"/>
    <property type="chains" value="S=1-237"/>
</dbReference>
<dbReference type="PDB" id="3PIO">
    <property type="method" value="X-ray"/>
    <property type="resolution" value="3.25 A"/>
    <property type="chains" value="S=1-237"/>
</dbReference>
<dbReference type="PDB" id="3PIP">
    <property type="method" value="X-ray"/>
    <property type="resolution" value="3.45 A"/>
    <property type="chains" value="S=1-237"/>
</dbReference>
<dbReference type="PDB" id="4IO9">
    <property type="method" value="X-ray"/>
    <property type="resolution" value="3.20 A"/>
    <property type="chains" value="S=1-237"/>
</dbReference>
<dbReference type="PDB" id="4IOA">
    <property type="method" value="X-ray"/>
    <property type="resolution" value="3.20 A"/>
    <property type="chains" value="S=1-237"/>
</dbReference>
<dbReference type="PDB" id="4IOC">
    <property type="method" value="X-ray"/>
    <property type="resolution" value="3.60 A"/>
    <property type="chains" value="S=1-237"/>
</dbReference>
<dbReference type="PDB" id="4U67">
    <property type="method" value="X-ray"/>
    <property type="resolution" value="3.65 A"/>
    <property type="chains" value="S=1-237"/>
</dbReference>
<dbReference type="PDB" id="4V49">
    <property type="method" value="X-ray"/>
    <property type="resolution" value="8.70 A"/>
    <property type="chains" value="T=1-173"/>
</dbReference>
<dbReference type="PDB" id="4V4A">
    <property type="method" value="X-ray"/>
    <property type="resolution" value="9.50 A"/>
    <property type="chains" value="T=1-173"/>
</dbReference>
<dbReference type="PDB" id="4V4G">
    <property type="method" value="X-ray"/>
    <property type="resolution" value="11.50 A"/>
    <property type="chains" value="W=1-173"/>
</dbReference>
<dbReference type="PDB" id="4V4P">
    <property type="method" value="X-ray"/>
    <property type="resolution" value="5.50 A"/>
    <property type="chains" value="V=1-237"/>
</dbReference>
<dbReference type="PDB" id="4V4R">
    <property type="method" value="X-ray"/>
    <property type="resolution" value="5.90 A"/>
    <property type="chains" value="Z=1-237"/>
</dbReference>
<dbReference type="PDB" id="4V4S">
    <property type="method" value="X-ray"/>
    <property type="resolution" value="6.76 A"/>
    <property type="chains" value="Z=1-237"/>
</dbReference>
<dbReference type="PDB" id="4V4T">
    <property type="method" value="X-ray"/>
    <property type="resolution" value="6.46 A"/>
    <property type="chains" value="Z=1-237"/>
</dbReference>
<dbReference type="PDB" id="4WFN">
    <property type="method" value="X-ray"/>
    <property type="resolution" value="3.54 A"/>
    <property type="chains" value="S=1-237"/>
</dbReference>
<dbReference type="PDB" id="5DM6">
    <property type="method" value="X-ray"/>
    <property type="resolution" value="2.90 A"/>
    <property type="chains" value="S=1-175"/>
</dbReference>
<dbReference type="PDB" id="5DM7">
    <property type="method" value="X-ray"/>
    <property type="resolution" value="3.00 A"/>
    <property type="chains" value="S=1-175"/>
</dbReference>
<dbReference type="PDB" id="5JVG">
    <property type="method" value="X-ray"/>
    <property type="resolution" value="3.43 A"/>
    <property type="chains" value="S=1-237"/>
</dbReference>
<dbReference type="PDB" id="5JVH">
    <property type="method" value="X-ray"/>
    <property type="resolution" value="3.58 A"/>
    <property type="chains" value="S=1-237"/>
</dbReference>
<dbReference type="PDB" id="7A0R">
    <property type="method" value="X-ray"/>
    <property type="resolution" value="3.30 A"/>
    <property type="chains" value="S=1-175"/>
</dbReference>
<dbReference type="PDB" id="7A0S">
    <property type="method" value="X-ray"/>
    <property type="resolution" value="3.22 A"/>
    <property type="chains" value="S=1-175"/>
</dbReference>
<dbReference type="PDB" id="7A18">
    <property type="method" value="X-ray"/>
    <property type="resolution" value="3.40 A"/>
    <property type="chains" value="S=1-175"/>
</dbReference>
<dbReference type="PDBsum" id="1NJM"/>
<dbReference type="PDBsum" id="1NJP"/>
<dbReference type="PDBsum" id="1NKW"/>
<dbReference type="PDBsum" id="1NWX"/>
<dbReference type="PDBsum" id="1NWY"/>
<dbReference type="PDBsum" id="1SM1"/>
<dbReference type="PDBsum" id="1XBP"/>
<dbReference type="PDBsum" id="2ZJP"/>
<dbReference type="PDBsum" id="2ZJQ"/>
<dbReference type="PDBsum" id="2ZJR"/>
<dbReference type="PDBsum" id="3CF5"/>
<dbReference type="PDBsum" id="3DLL"/>
<dbReference type="PDBsum" id="3PIO"/>
<dbReference type="PDBsum" id="3PIP"/>
<dbReference type="PDBsum" id="4IO9"/>
<dbReference type="PDBsum" id="4IOA"/>
<dbReference type="PDBsum" id="4IOC"/>
<dbReference type="PDBsum" id="4U67"/>
<dbReference type="PDBsum" id="4V49"/>
<dbReference type="PDBsum" id="4V4A"/>
<dbReference type="PDBsum" id="4V4G"/>
<dbReference type="PDBsum" id="4V4P"/>
<dbReference type="PDBsum" id="4V4R"/>
<dbReference type="PDBsum" id="4V4S"/>
<dbReference type="PDBsum" id="4V4T"/>
<dbReference type="PDBsum" id="4WFN"/>
<dbReference type="PDBsum" id="5DM6"/>
<dbReference type="PDBsum" id="5DM7"/>
<dbReference type="PDBsum" id="5JVG"/>
<dbReference type="PDBsum" id="5JVH"/>
<dbReference type="PDBsum" id="7A0R"/>
<dbReference type="PDBsum" id="7A0S"/>
<dbReference type="PDBsum" id="7A18"/>
<dbReference type="SMR" id="Q9RX88"/>
<dbReference type="FunCoup" id="Q9RX88">
    <property type="interactions" value="309"/>
</dbReference>
<dbReference type="IntAct" id="Q9RX88">
    <property type="interactions" value="1"/>
</dbReference>
<dbReference type="STRING" id="243230.DR_0427"/>
<dbReference type="PaxDb" id="243230-DR_0427"/>
<dbReference type="EnsemblBacteria" id="AAF10004">
    <property type="protein sequence ID" value="AAF10004"/>
    <property type="gene ID" value="DR_0427"/>
</dbReference>
<dbReference type="GeneID" id="69516659"/>
<dbReference type="KEGG" id="dra:DR_0427"/>
<dbReference type="PATRIC" id="fig|243230.17.peg.601"/>
<dbReference type="eggNOG" id="COG1825">
    <property type="taxonomic scope" value="Bacteria"/>
</dbReference>
<dbReference type="HOGENOM" id="CLU_075939_2_0_0"/>
<dbReference type="InParanoid" id="Q9RX88"/>
<dbReference type="OrthoDB" id="5242980at2"/>
<dbReference type="EvolutionaryTrace" id="Q9RX88"/>
<dbReference type="Proteomes" id="UP000002524">
    <property type="component" value="Chromosome 1"/>
</dbReference>
<dbReference type="GO" id="GO:0022625">
    <property type="term" value="C:cytosolic large ribosomal subunit"/>
    <property type="evidence" value="ECO:0000318"/>
    <property type="project" value="GO_Central"/>
</dbReference>
<dbReference type="GO" id="GO:0008097">
    <property type="term" value="F:5S rRNA binding"/>
    <property type="evidence" value="ECO:0000318"/>
    <property type="project" value="GO_Central"/>
</dbReference>
<dbReference type="GO" id="GO:0003735">
    <property type="term" value="F:structural constituent of ribosome"/>
    <property type="evidence" value="ECO:0007669"/>
    <property type="project" value="InterPro"/>
</dbReference>
<dbReference type="GO" id="GO:0000049">
    <property type="term" value="F:tRNA binding"/>
    <property type="evidence" value="ECO:0007669"/>
    <property type="project" value="UniProtKB-KW"/>
</dbReference>
<dbReference type="GO" id="GO:0006412">
    <property type="term" value="P:translation"/>
    <property type="evidence" value="ECO:0000318"/>
    <property type="project" value="GO_Central"/>
</dbReference>
<dbReference type="CDD" id="cd00495">
    <property type="entry name" value="Ribosomal_L25_TL5_CTC"/>
    <property type="match status" value="1"/>
</dbReference>
<dbReference type="Gene3D" id="2.170.120.20">
    <property type="entry name" value="Ribosomal protein L25, beta domain"/>
    <property type="match status" value="1"/>
</dbReference>
<dbReference type="Gene3D" id="2.40.240.10">
    <property type="entry name" value="Ribosomal Protein L25, Chain P"/>
    <property type="match status" value="1"/>
</dbReference>
<dbReference type="HAMAP" id="MF_01334">
    <property type="entry name" value="Ribosomal_bL25_CTC"/>
    <property type="match status" value="1"/>
</dbReference>
<dbReference type="InterPro" id="IPR020056">
    <property type="entry name" value="Rbsml_bL25/Gln-tRNA_synth_N"/>
</dbReference>
<dbReference type="InterPro" id="IPR011035">
    <property type="entry name" value="Ribosomal_bL25/Gln-tRNA_synth"/>
</dbReference>
<dbReference type="InterPro" id="IPR020057">
    <property type="entry name" value="Ribosomal_bL25_b-dom"/>
</dbReference>
<dbReference type="InterPro" id="IPR037121">
    <property type="entry name" value="Ribosomal_bL25_C"/>
</dbReference>
<dbReference type="InterPro" id="IPR001021">
    <property type="entry name" value="Ribosomal_bL25_long"/>
</dbReference>
<dbReference type="InterPro" id="IPR029751">
    <property type="entry name" value="Ribosomal_L25_dom"/>
</dbReference>
<dbReference type="InterPro" id="IPR020930">
    <property type="entry name" value="Ribosomal_uL5_bac-type"/>
</dbReference>
<dbReference type="NCBIfam" id="TIGR00731">
    <property type="entry name" value="bL25_bact_ctc"/>
    <property type="match status" value="1"/>
</dbReference>
<dbReference type="NCBIfam" id="NF004137">
    <property type="entry name" value="PRK05618.3-3"/>
    <property type="match status" value="1"/>
</dbReference>
<dbReference type="PANTHER" id="PTHR33284">
    <property type="entry name" value="RIBOSOMAL PROTEIN L25/GLN-TRNA SYNTHETASE, ANTI-CODON-BINDING DOMAIN-CONTAINING PROTEIN"/>
    <property type="match status" value="1"/>
</dbReference>
<dbReference type="PANTHER" id="PTHR33284:SF1">
    <property type="entry name" value="RIBOSOMAL PROTEIN L25_GLN-TRNA SYNTHETASE, ANTI-CODON-BINDING DOMAIN-CONTAINING PROTEIN"/>
    <property type="match status" value="1"/>
</dbReference>
<dbReference type="Pfam" id="PF01386">
    <property type="entry name" value="Ribosomal_L25p"/>
    <property type="match status" value="1"/>
</dbReference>
<dbReference type="Pfam" id="PF14693">
    <property type="entry name" value="Ribosomal_TL5_C"/>
    <property type="match status" value="1"/>
</dbReference>
<dbReference type="SUPFAM" id="SSF50715">
    <property type="entry name" value="Ribosomal protein L25-like"/>
    <property type="match status" value="1"/>
</dbReference>
<protein>
    <recommendedName>
        <fullName evidence="8">Large ribosomal subunit protein bL25</fullName>
    </recommendedName>
    <alternativeName>
        <fullName>50S ribosomal protein L25</fullName>
    </alternativeName>
    <alternativeName>
        <fullName>General stress protein CTC</fullName>
    </alternativeName>
</protein>
<evidence type="ECO:0000256" key="1">
    <source>
        <dbReference type="SAM" id="MobiDB-lite"/>
    </source>
</evidence>
<evidence type="ECO:0000269" key="2">
    <source>
    </source>
</evidence>
<evidence type="ECO:0000269" key="3">
    <source>
    </source>
</evidence>
<evidence type="ECO:0000269" key="4">
    <source>
    </source>
</evidence>
<evidence type="ECO:0000269" key="5">
    <source>
    </source>
</evidence>
<evidence type="ECO:0000269" key="6">
    <source>
    </source>
</evidence>
<evidence type="ECO:0000269" key="7">
    <source>
    </source>
</evidence>
<evidence type="ECO:0000305" key="8"/>
<evidence type="ECO:0007829" key="9">
    <source>
        <dbReference type="PDB" id="2ZJR"/>
    </source>
</evidence>
<evidence type="ECO:0007829" key="10">
    <source>
        <dbReference type="PDB" id="4IO9"/>
    </source>
</evidence>
<evidence type="ECO:0007829" key="11">
    <source>
        <dbReference type="PDB" id="5DM6"/>
    </source>
</evidence>
<evidence type="ECO:0007829" key="12">
    <source>
        <dbReference type="PDB" id="5DM7"/>
    </source>
</evidence>
<evidence type="ECO:0007829" key="13">
    <source>
        <dbReference type="PDB" id="5JVG"/>
    </source>
</evidence>
<evidence type="ECO:0007829" key="14">
    <source>
        <dbReference type="PDB" id="7A0S"/>
    </source>
</evidence>
<evidence type="ECO:0007829" key="15">
    <source>
        <dbReference type="PDB" id="7A18"/>
    </source>
</evidence>
<organism>
    <name type="scientific">Deinococcus radiodurans (strain ATCC 13939 / DSM 20539 / JCM 16871 / CCUG 27074 / LMG 4051 / NBRC 15346 / NCIMB 9279 / VKM B-1422 / R1)</name>
    <dbReference type="NCBI Taxonomy" id="243230"/>
    <lineage>
        <taxon>Bacteria</taxon>
        <taxon>Thermotogati</taxon>
        <taxon>Deinococcota</taxon>
        <taxon>Deinococci</taxon>
        <taxon>Deinococcales</taxon>
        <taxon>Deinococcaceae</taxon>
        <taxon>Deinococcus</taxon>
    </lineage>
</organism>
<keyword id="KW-0002">3D-structure</keyword>
<keyword id="KW-0903">Direct protein sequencing</keyword>
<keyword id="KW-1185">Reference proteome</keyword>
<keyword id="KW-0687">Ribonucleoprotein</keyword>
<keyword id="KW-0689">Ribosomal protein</keyword>
<keyword id="KW-0694">RNA-binding</keyword>
<keyword id="KW-0699">rRNA-binding</keyword>
<keyword id="KW-0820">tRNA-binding</keyword>
<reference key="1">
    <citation type="journal article" date="1999" name="Science">
        <title>Genome sequence of the radioresistant bacterium Deinococcus radiodurans R1.</title>
        <authorList>
            <person name="White O."/>
            <person name="Eisen J.A."/>
            <person name="Heidelberg J.F."/>
            <person name="Hickey E.K."/>
            <person name="Peterson J.D."/>
            <person name="Dodson R.J."/>
            <person name="Haft D.H."/>
            <person name="Gwinn M.L."/>
            <person name="Nelson W.C."/>
            <person name="Richardson D.L."/>
            <person name="Moffat K.S."/>
            <person name="Qin H."/>
            <person name="Jiang L."/>
            <person name="Pamphile W."/>
            <person name="Crosby M."/>
            <person name="Shen M."/>
            <person name="Vamathevan J.J."/>
            <person name="Lam P."/>
            <person name="McDonald L.A."/>
            <person name="Utterback T.R."/>
            <person name="Zalewski C."/>
            <person name="Makarova K.S."/>
            <person name="Aravind L."/>
            <person name="Daly M.J."/>
            <person name="Minton K.W."/>
            <person name="Fleischmann R.D."/>
            <person name="Ketchum K.A."/>
            <person name="Nelson K.E."/>
            <person name="Salzberg S.L."/>
            <person name="Smith H.O."/>
            <person name="Venter J.C."/>
            <person name="Fraser C.M."/>
        </authorList>
    </citation>
    <scope>NUCLEOTIDE SEQUENCE [LARGE SCALE GENOMIC DNA]</scope>
    <source>
        <strain>ATCC 13939 / DSM 20539 / JCM 16871 / CCUG 27074 / LMG 4051 / NBRC 15346 / NCIMB 9279 / VKM B-1422 / R1</strain>
    </source>
</reference>
<reference key="2">
    <citation type="journal article" date="2004" name="Biochem. Biophys. Res. Commun.">
        <title>Protein recycling is a major component of post-irradiation recovery in Deinococcus radiodurans strain R1.</title>
        <authorList>
            <person name="Joshi B.S."/>
            <person name="Schmid R."/>
            <person name="Altendorf K."/>
            <person name="Apte S.K."/>
        </authorList>
    </citation>
    <scope>PROTEIN SEQUENCE OF 1-22</scope>
    <source>
        <strain>ATCC 13939 / DSM 20539 / JCM 16871 / CCUG 27074 / LMG 4051 / NBRC 15346 / NCIMB 9279 / VKM B-1422 / R1</strain>
    </source>
</reference>
<reference key="3">
    <citation type="journal article" date="2001" name="Cell">
        <title>High resolution structure of the large ribosomal subunit from a mesophilic eubacterium.</title>
        <authorList>
            <person name="Harms J."/>
            <person name="Schluenzen F."/>
            <person name="Zarivach R."/>
            <person name="Bashan A."/>
            <person name="Gat S."/>
            <person name="Agmon I."/>
            <person name="Bartels H."/>
            <person name="Franceschi F."/>
            <person name="Yonath A."/>
        </authorList>
    </citation>
    <scope>X-RAY CRYSTALLOGRAPHY (3.1 ANGSTROMS) OF THE 50S SUBUNIT</scope>
    <scope>PROTEIN SEQUENCE OF 1-5</scope>
    <source>
        <strain>ATCC 13939 / DSM 20539 / JCM 16871 / CCUG 27074 / LMG 4051 / NBRC 15346 / NCIMB 9279 / VKM B-1422 / R1</strain>
    </source>
</reference>
<reference key="4">
    <citation type="journal article" date="2001" name="Nature">
        <title>Structural basis for the interaction of antibiotics with the peptidyl transferase centre in eubacteria.</title>
        <authorList>
            <person name="Schluenzen F."/>
            <person name="Zarivach R."/>
            <person name="Harms J."/>
            <person name="Bashan A."/>
            <person name="Tocilj A."/>
            <person name="Albrecht R."/>
            <person name="Yonath A."/>
            <person name="Franceschi F."/>
        </authorList>
    </citation>
    <scope>X-RAY CRYSTALLOGRAPHY (3.1 ANGSTROMS) OF THE 50S SUBUNIT IN COMPLEX WITH FIVE ANTIBIOTICS</scope>
    <source>
        <strain>ATCC 13939 / DSM 20539 / JCM 16871 / CCUG 27074 / LMG 4051 / NBRC 15346 / NCIMB 9279 / VKM B-1422 / R1</strain>
    </source>
</reference>
<reference key="5">
    <citation type="journal article" date="2003" name="Mol. Cell">
        <title>Structural basis of the ribosomal machinery for peptide bond formation, translocation, and nascent chain progression.</title>
        <authorList>
            <person name="Bashan A."/>
            <person name="Agmon I."/>
            <person name="Zarivach R."/>
            <person name="Schluenzen F."/>
            <person name="Harms J."/>
            <person name="Berisio R."/>
            <person name="Bartels H."/>
            <person name="Franceschi F."/>
            <person name="Auerbach T."/>
            <person name="Hansen H.A."/>
            <person name="Kossoy E."/>
            <person name="Kessler M."/>
            <person name="Yonath A."/>
        </authorList>
    </citation>
    <scope>X-RAY CRYSTALLOGRAPHY (3.5 ANGSTROMS) OF THE 50S SUBUNIT IN COMPLEX WITH TRNA MIMICS</scope>
    <source>
        <strain>ATCC 13939 / DSM 20539 / JCM 16871 / CCUG 27074 / LMG 4051 / NBRC 15346 / NCIMB 9279 / VKM B-1422 / R1</strain>
    </source>
</reference>
<reference key="6">
    <citation type="journal article" date="2003" name="Structure">
        <title>Structural basis for the antibiotic activity of ketolides and azalides.</title>
        <authorList>
            <person name="Schluenzen F."/>
            <person name="Harms J.M."/>
            <person name="Franceschi F."/>
            <person name="Hansen H.A."/>
            <person name="Bartels H."/>
            <person name="Zarivach R."/>
            <person name="Yonath A."/>
        </authorList>
    </citation>
    <scope>X-RAY CRYSTALLOGRAPHY (3.3 ANGSTROMS) OF THE 50S SUBUNIT IN COMPLEX WITH MODIFIED MACROLIDE ANTIBIOTICS</scope>
    <source>
        <strain>ATCC 13939 / DSM 20539 / JCM 16871 / CCUG 27074 / LMG 4051 / NBRC 15346 / NCIMB 9279 / VKM B-1422 / R1</strain>
    </source>
</reference>
<reference key="7">
    <citation type="journal article" date="2003" name="Nat. Struct. Biol.">
        <title>Structural insight into the role of the ribosomal tunnel in cellular regulation.</title>
        <authorList>
            <person name="Berisio R."/>
            <person name="Schluenzen F."/>
            <person name="Harms J."/>
            <person name="Bashan A."/>
            <person name="Auerbach T."/>
            <person name="Baram D."/>
            <person name="Yonath A."/>
        </authorList>
    </citation>
    <scope>X-RAY CRYSTALLOGRAPHY (3.4 ANGSTROMS) OF THE 50S SUBUNIT IN COMPLEX WITH TROLEANDOMYCIN</scope>
    <source>
        <strain>ATCC 13939 / DSM 20539 / JCM 16871 / CCUG 27074 / LMG 4051 / NBRC 15346 / NCIMB 9279 / VKM B-1422 / R1</strain>
    </source>
</reference>
<reference key="8">
    <citation type="journal article" date="2004" name="BMC Biol.">
        <title>Alterations at the peptidyl transferase centre of the ribosome induced by the synergistic action of the streptogramins dalfopristin and quinupristin.</title>
        <authorList>
            <person name="Harms J.M."/>
            <person name="Schluenzen F."/>
            <person name="Fucini P."/>
            <person name="Bartels H."/>
            <person name="Yonath A."/>
        </authorList>
    </citation>
    <scope>X-RAY CRYSTALLOGRAPHY (3.4 ANGSTROMS) OF THE 50S SUBUNIT IN COMPLEX WITH THE STREPTOGRAMINS QUINUPRISTIN AND DALFOPRISTIN</scope>
    <source>
        <strain>ATCC 13939 / DSM 20539 / JCM 16871 / CCUG 27074 / LMG 4051 / NBRC 15346 / NCIMB 9279 / VKM B-1422 / R1</strain>
    </source>
</reference>
<reference key="9">
    <citation type="journal article" date="2004" name="Mol. Microbiol.">
        <title>Inhibition of peptide bond formation by pleuromutilins: the structure of the 50S ribosomal subunit from Deinococcus radiodurans in complex with tiamulin.</title>
        <authorList>
            <person name="Schluenzen F."/>
            <person name="Pyetan E."/>
            <person name="Fucini P."/>
            <person name="Yonath A."/>
            <person name="Harms J.M."/>
        </authorList>
    </citation>
    <scope>X-RAY CRYSTALLOGRAPHY (3.5 ANGSTROMS) OF THE 50S SUBUNIT IN COMPLEX WITH TIAMULIN</scope>
    <source>
        <strain>ATCC 13939 / DSM 20539 / JCM 16871 / CCUG 27074 / LMG 4051 / NBRC 15346 / NCIMB 9279 / VKM B-1422 / R1</strain>
    </source>
</reference>